<feature type="chain" id="PRO_0000234061" description="Protein DBF4 homolog A">
    <location>
        <begin position="1"/>
        <end position="674"/>
    </location>
</feature>
<feature type="domain" description="BRCT 1">
    <location>
        <begin position="40"/>
        <end position="128"/>
    </location>
</feature>
<feature type="domain" description="BRCT 2">
    <location>
        <begin position="154"/>
        <end position="179"/>
    </location>
</feature>
<feature type="zinc finger region" description="DBF4-type" evidence="1">
    <location>
        <begin position="289"/>
        <end position="337"/>
    </location>
</feature>
<feature type="region of interest" description="Disordered" evidence="2">
    <location>
        <begin position="1"/>
        <end position="40"/>
    </location>
</feature>
<feature type="region of interest" description="Disordered" evidence="2">
    <location>
        <begin position="100"/>
        <end position="131"/>
    </location>
</feature>
<feature type="short sequence motif" description="Integrase domain-binding motif 1 (IBM1)" evidence="7">
    <location>
        <begin position="614"/>
        <end position="638"/>
    </location>
</feature>
<feature type="short sequence motif" description="Integrase domain-binding motif 2 (IBM2)" evidence="7">
    <location>
        <begin position="655"/>
        <end position="674"/>
    </location>
</feature>
<feature type="compositionally biased region" description="Basic and acidic residues" evidence="2">
    <location>
        <begin position="21"/>
        <end position="40"/>
    </location>
</feature>
<feature type="compositionally biased region" description="Polar residues" evidence="2">
    <location>
        <begin position="113"/>
        <end position="130"/>
    </location>
</feature>
<feature type="binding site" evidence="1">
    <location>
        <position position="296"/>
    </location>
    <ligand>
        <name>Zn(2+)</name>
        <dbReference type="ChEBI" id="CHEBI:29105"/>
    </ligand>
</feature>
<feature type="binding site" evidence="1">
    <location>
        <position position="299"/>
    </location>
    <ligand>
        <name>Zn(2+)</name>
        <dbReference type="ChEBI" id="CHEBI:29105"/>
    </ligand>
</feature>
<feature type="binding site" evidence="1">
    <location>
        <position position="309"/>
    </location>
    <ligand>
        <name>Zn(2+)</name>
        <dbReference type="ChEBI" id="CHEBI:29105"/>
    </ligand>
</feature>
<feature type="binding site" evidence="1">
    <location>
        <position position="315"/>
    </location>
    <ligand>
        <name>Zn(2+)</name>
        <dbReference type="ChEBI" id="CHEBI:29105"/>
    </ligand>
</feature>
<feature type="modified residue" description="Phosphothreonine" evidence="11 13">
    <location>
        <position position="273"/>
    </location>
</feature>
<feature type="modified residue" description="Phosphoserine" evidence="13">
    <location>
        <position position="312"/>
    </location>
</feature>
<feature type="modified residue" description="Phosphothreonine" evidence="11 13">
    <location>
        <position position="345"/>
    </location>
</feature>
<feature type="modified residue" description="Phosphoserine" evidence="10">
    <location>
        <position position="354"/>
    </location>
</feature>
<feature type="modified residue" description="Phosphoserine" evidence="10 12 13">
    <location>
        <position position="359"/>
    </location>
</feature>
<feature type="modified residue" description="Phosphoserine" evidence="11 13">
    <location>
        <position position="381"/>
    </location>
</feature>
<feature type="modified residue" description="Phosphoserine" evidence="11 13">
    <location>
        <position position="413"/>
    </location>
</feature>
<feature type="modified residue" description="Phosphoserine" evidence="13">
    <location>
        <position position="508"/>
    </location>
</feature>
<feature type="modified residue" description="Phosphothreonine" evidence="13">
    <location>
        <position position="553"/>
    </location>
</feature>
<feature type="modified residue" description="Phosphoserine" evidence="7">
    <location>
        <position position="625"/>
    </location>
</feature>
<feature type="modified residue" description="Phosphoserine" evidence="7">
    <location>
        <position position="667"/>
    </location>
</feature>
<feature type="modified residue" description="Phosphoserine" evidence="7">
    <location>
        <position position="669"/>
    </location>
</feature>
<feature type="splice variant" id="VSP_018203" description="In isoform 2." evidence="8">
    <original>LYRPFYL</original>
    <variation>SPAVHLM</variation>
    <location>
        <begin position="228"/>
        <end position="234"/>
    </location>
</feature>
<feature type="splice variant" id="VSP_018204" description="In isoform 2." evidence="8">
    <location>
        <begin position="235"/>
        <end position="674"/>
    </location>
</feature>
<feature type="sequence variant" id="VAR_052970" description="In dbSNP:rs1476703.">
    <original>Y</original>
    <variation>N</variation>
    <location>
        <position position="112"/>
    </location>
</feature>
<feature type="sequence variant" id="VAR_052971" description="In dbSNP:rs2041049.">
    <original>H</original>
    <variation>R</variation>
    <location>
        <position position="575"/>
    </location>
</feature>
<feature type="mutagenesis site" description="Phosphomimetic mutant. Increased interaction with PSIP1." evidence="7">
    <original>S</original>
    <variation>D</variation>
    <location>
        <position position="625"/>
    </location>
</feature>
<feature type="mutagenesis site" description="Loss of interaction with PSIP1; when associated with A-634." evidence="7">
    <original>F</original>
    <variation>A</variation>
    <location>
        <position position="631"/>
    </location>
</feature>
<feature type="mutagenesis site" description="Loss of interaction with PSIP1; when associated with A-631." evidence="7">
    <original>F</original>
    <variation>A</variation>
    <location>
        <position position="634"/>
    </location>
</feature>
<feature type="mutagenesis site" description="Phosphomimetic mutant. Increased interaction with PSIP1; when associated with D-669." evidence="7">
    <original>S</original>
    <variation>D</variation>
    <location>
        <position position="667"/>
    </location>
</feature>
<feature type="mutagenesis site" description="Phosphomimetic mutant. Increased interaction with PSIP1; when associated with D-667." evidence="7">
    <original>S</original>
    <variation>D</variation>
    <location>
        <position position="669"/>
    </location>
</feature>
<feature type="sequence conflict" description="In Ref. 6; EAL24170." evidence="9" ref="6">
    <original>I</original>
    <variation>L</variation>
    <location>
        <position position="581"/>
    </location>
</feature>
<feature type="sequence conflict" description="In Ref. 6; EAL24170." evidence="9" ref="6">
    <original>R</original>
    <variation>Q</variation>
    <location>
        <position position="584"/>
    </location>
</feature>
<feature type="sequence conflict" description="In Ref. 6; EAL24170." evidence="9" ref="6">
    <original>L</original>
    <variation>P</variation>
    <location>
        <position position="619"/>
    </location>
</feature>
<feature type="strand" evidence="15">
    <location>
        <begin position="217"/>
        <end position="224"/>
    </location>
</feature>
<feature type="strand" evidence="14">
    <location>
        <begin position="227"/>
        <end position="229"/>
    </location>
</feature>
<feature type="strand" evidence="15">
    <location>
        <begin position="232"/>
        <end position="235"/>
    </location>
</feature>
<feature type="strand" evidence="15">
    <location>
        <begin position="244"/>
        <end position="246"/>
    </location>
</feature>
<feature type="strand" evidence="15">
    <location>
        <begin position="294"/>
        <end position="296"/>
    </location>
</feature>
<feature type="turn" evidence="15">
    <location>
        <begin position="297"/>
        <end position="300"/>
    </location>
</feature>
<feature type="strand" evidence="15">
    <location>
        <begin position="301"/>
        <end position="304"/>
    </location>
</feature>
<feature type="helix" evidence="15">
    <location>
        <begin position="306"/>
        <end position="309"/>
    </location>
</feature>
<feature type="helix" evidence="15">
    <location>
        <begin position="313"/>
        <end position="319"/>
    </location>
</feature>
<feature type="helix" evidence="16">
    <location>
        <begin position="322"/>
        <end position="324"/>
    </location>
</feature>
<feature type="helix" evidence="15">
    <location>
        <begin position="325"/>
        <end position="331"/>
    </location>
</feature>
<comment type="function">
    <text evidence="3 4 6">Regulatory subunit for CDC7 which activates its kinase activity thereby playing a central role in DNA replication and cell proliferation. Required for progression of S phase. The complex CDC7-DBF4A selectively phosphorylates MCM2 subunit at 'Ser-40' and 'Ser-53' and then is involved in regulating the initiation of DNA replication during cell cycle.</text>
</comment>
<comment type="subunit">
    <text evidence="3 4 5 6 7">Forms a complex with CDC7. Note that CDC7 forms distinct complex either with DBF4A or DBF4B. Such complexes are stable upon replication stress. Interacts with MEN1, MCM2, ORC2, ORC4 and ORC6. Interacts (via IBM motifs) with PSIP1 (via IBD domain); phosphorylation increases its affinity for PSIP1 (PubMed:29997176).</text>
</comment>
<comment type="interaction">
    <interactant intactId="EBI-372690">
        <id>Q9UBU7</id>
    </interactant>
    <interactant intactId="EBI-718504">
        <id>Q13867</id>
        <label>BLMH</label>
    </interactant>
    <organismsDiffer>false</organismsDiffer>
    <experiments>3</experiments>
</comment>
<comment type="interaction">
    <interactant intactId="EBI-372690">
        <id>Q9UBU7</id>
    </interactant>
    <interactant intactId="EBI-374980">
        <id>O00311</id>
        <label>CDC7</label>
    </interactant>
    <organismsDiffer>false</organismsDiffer>
    <experiments>9</experiments>
</comment>
<comment type="interaction">
    <interactant intactId="EBI-372690">
        <id>Q9UBU7</id>
    </interactant>
    <interactant intactId="EBI-79333">
        <id>P36544</id>
        <label>CHRNA7</label>
    </interactant>
    <organismsDiffer>false</organismsDiffer>
    <experiments>3</experiments>
</comment>
<comment type="interaction">
    <interactant intactId="EBI-372690">
        <id>Q9UBU7</id>
    </interactant>
    <interactant intactId="EBI-744302">
        <id>P14136</id>
        <label>GFAP</label>
    </interactant>
    <organismsDiffer>false</organismsDiffer>
    <experiments>3</experiments>
</comment>
<comment type="interaction">
    <interactant intactId="EBI-372690">
        <id>Q9UBU7</id>
    </interactant>
    <interactant intactId="EBI-352528">
        <id>P10809</id>
        <label>HSPD1</label>
    </interactant>
    <organismsDiffer>false</organismsDiffer>
    <experiments>3</experiments>
</comment>
<comment type="interaction">
    <interactant intactId="EBI-372690">
        <id>Q9UBU7</id>
    </interactant>
    <interactant intactId="EBI-10178578">
        <id>I6L9F6</id>
        <label>NEFL</label>
    </interactant>
    <organismsDiffer>false</organismsDiffer>
    <experiments>3</experiments>
</comment>
<comment type="interaction">
    <interactant intactId="EBI-372690">
        <id>Q9UBU7</id>
    </interactant>
    <interactant intactId="EBI-21251460">
        <id>O60260-5</id>
        <label>PRKN</label>
    </interactant>
    <organismsDiffer>false</organismsDiffer>
    <experiments>3</experiments>
</comment>
<comment type="interaction">
    <interactant intactId="EBI-16017435">
        <id>Q9UBU7-1</id>
    </interactant>
    <interactant intactId="EBI-374980">
        <id>O00311</id>
        <label>CDC7</label>
    </interactant>
    <organismsDiffer>false</organismsDiffer>
    <experiments>3</experiments>
</comment>
<comment type="subcellular location">
    <subcellularLocation>
        <location evidence="3">Nucleus</location>
    </subcellularLocation>
</comment>
<comment type="alternative products">
    <event type="alternative splicing"/>
    <isoform>
        <id>Q9UBU7-1</id>
        <name>1</name>
        <sequence type="displayed"/>
    </isoform>
    <isoform>
        <id>Q9UBU7-2</id>
        <name>2</name>
        <sequence type="described" ref="VSP_018203 VSP_018204"/>
    </isoform>
</comment>
<comment type="tissue specificity">
    <text evidence="3">Highly expressed in testis and thymus. Expressed also in most cancer cells lines.</text>
</comment>
<comment type="induction">
    <text evidence="3 4">Induced in G1 phase at low level, increased during G1-S phase and remain high during S and G2-M phase.</text>
</comment>
<comment type="PTM">
    <text evidence="7">Phosphorylation increases its interaction with PSIP1.</text>
</comment>
<proteinExistence type="evidence at protein level"/>
<name>DBF4A_HUMAN</name>
<keyword id="KW-0002">3D-structure</keyword>
<keyword id="KW-0025">Alternative splicing</keyword>
<keyword id="KW-0131">Cell cycle</keyword>
<keyword id="KW-0235">DNA replication</keyword>
<keyword id="KW-0479">Metal-binding</keyword>
<keyword id="KW-0539">Nucleus</keyword>
<keyword id="KW-0597">Phosphoprotein</keyword>
<keyword id="KW-1267">Proteomics identification</keyword>
<keyword id="KW-1185">Reference proteome</keyword>
<keyword id="KW-0677">Repeat</keyword>
<keyword id="KW-0862">Zinc</keyword>
<keyword id="KW-0863">Zinc-finger</keyword>
<dbReference type="EMBL" id="AB028069">
    <property type="protein sequence ID" value="BAA78326.1"/>
    <property type="molecule type" value="mRNA"/>
</dbReference>
<dbReference type="EMBL" id="AB028070">
    <property type="protein sequence ID" value="BAA78327.1"/>
    <property type="molecule type" value="mRNA"/>
</dbReference>
<dbReference type="EMBL" id="AF160249">
    <property type="protein sequence ID" value="AAD41911.1"/>
    <property type="molecule type" value="mRNA"/>
</dbReference>
<dbReference type="EMBL" id="AF160876">
    <property type="protein sequence ID" value="AAD45357.1"/>
    <property type="molecule type" value="mRNA"/>
</dbReference>
<dbReference type="EMBL" id="AK292569">
    <property type="protein sequence ID" value="BAF85258.1"/>
    <property type="molecule type" value="mRNA"/>
</dbReference>
<dbReference type="EMBL" id="AC003083">
    <property type="protein sequence ID" value="AAS07442.1"/>
    <property type="molecule type" value="Genomic_DNA"/>
</dbReference>
<dbReference type="EMBL" id="AC005164">
    <property type="protein sequence ID" value="AAS07418.1"/>
    <property type="molecule type" value="Genomic_DNA"/>
</dbReference>
<dbReference type="EMBL" id="CH236949">
    <property type="protein sequence ID" value="EAL24170.1"/>
    <property type="molecule type" value="Genomic_DNA"/>
</dbReference>
<dbReference type="EMBL" id="CH471091">
    <property type="protein sequence ID" value="EAW76930.1"/>
    <property type="molecule type" value="Genomic_DNA"/>
</dbReference>
<dbReference type="EMBL" id="BC036045">
    <property type="protein sequence ID" value="AAH36045.1"/>
    <property type="molecule type" value="mRNA"/>
</dbReference>
<dbReference type="EMBL" id="BC047693">
    <property type="protein sequence ID" value="AAH47693.1"/>
    <property type="molecule type" value="mRNA"/>
</dbReference>
<dbReference type="CCDS" id="CCDS5611.1">
    <molecule id="Q9UBU7-1"/>
</dbReference>
<dbReference type="PIR" id="T02633">
    <property type="entry name" value="T02633"/>
</dbReference>
<dbReference type="RefSeq" id="NP_001304989.1">
    <property type="nucleotide sequence ID" value="NM_001318060.1"/>
</dbReference>
<dbReference type="RefSeq" id="NP_001304990.1">
    <property type="nucleotide sequence ID" value="NM_001318061.1"/>
</dbReference>
<dbReference type="RefSeq" id="NP_001304991.1">
    <property type="nucleotide sequence ID" value="NM_001318062.1"/>
</dbReference>
<dbReference type="RefSeq" id="NP_006707.1">
    <molecule id="Q9UBU7-1"/>
    <property type="nucleotide sequence ID" value="NM_006716.4"/>
</dbReference>
<dbReference type="PDB" id="4F99">
    <property type="method" value="X-ray"/>
    <property type="resolution" value="2.33 A"/>
    <property type="chains" value="B=210-350"/>
</dbReference>
<dbReference type="PDB" id="4F9A">
    <property type="method" value="X-ray"/>
    <property type="resolution" value="2.17 A"/>
    <property type="chains" value="B/D=210-350"/>
</dbReference>
<dbReference type="PDB" id="4F9B">
    <property type="method" value="X-ray"/>
    <property type="resolution" value="2.50 A"/>
    <property type="chains" value="B/D=210-350"/>
</dbReference>
<dbReference type="PDB" id="4F9C">
    <property type="method" value="X-ray"/>
    <property type="resolution" value="2.08 A"/>
    <property type="chains" value="B=210-350"/>
</dbReference>
<dbReference type="PDB" id="6YA6">
    <property type="method" value="X-ray"/>
    <property type="resolution" value="1.44 A"/>
    <property type="chains" value="B=210-350"/>
</dbReference>
<dbReference type="PDB" id="6YA7">
    <property type="method" value="X-ray"/>
    <property type="resolution" value="1.67 A"/>
    <property type="chains" value="B=210-350"/>
</dbReference>
<dbReference type="PDB" id="6YA8">
    <property type="method" value="X-ray"/>
    <property type="resolution" value="1.79 A"/>
    <property type="chains" value="B=210-350"/>
</dbReference>
<dbReference type="PDBsum" id="4F99"/>
<dbReference type="PDBsum" id="4F9A"/>
<dbReference type="PDBsum" id="4F9B"/>
<dbReference type="PDBsum" id="4F9C"/>
<dbReference type="PDBsum" id="6YA6"/>
<dbReference type="PDBsum" id="6YA7"/>
<dbReference type="PDBsum" id="6YA8"/>
<dbReference type="SMR" id="Q9UBU7"/>
<dbReference type="BioGRID" id="116129">
    <property type="interactions" value="39"/>
</dbReference>
<dbReference type="CORUM" id="Q9UBU7"/>
<dbReference type="DIP" id="DIP-31205N"/>
<dbReference type="FunCoup" id="Q9UBU7">
    <property type="interactions" value="1797"/>
</dbReference>
<dbReference type="IntAct" id="Q9UBU7">
    <property type="interactions" value="16"/>
</dbReference>
<dbReference type="MINT" id="Q9UBU7"/>
<dbReference type="STRING" id="9606.ENSP00000265728"/>
<dbReference type="BindingDB" id="Q9UBU7"/>
<dbReference type="ChEMBL" id="CHEMBL4483"/>
<dbReference type="GlyGen" id="Q9UBU7">
    <property type="glycosylation" value="4 sites, 1 O-linked glycan (4 sites)"/>
</dbReference>
<dbReference type="iPTMnet" id="Q9UBU7"/>
<dbReference type="PhosphoSitePlus" id="Q9UBU7"/>
<dbReference type="BioMuta" id="DBF4"/>
<dbReference type="DMDM" id="74753231"/>
<dbReference type="jPOST" id="Q9UBU7"/>
<dbReference type="MassIVE" id="Q9UBU7"/>
<dbReference type="PaxDb" id="9606-ENSP00000265728"/>
<dbReference type="PeptideAtlas" id="Q9UBU7"/>
<dbReference type="ProteomicsDB" id="84071">
    <molecule id="Q9UBU7-1"/>
</dbReference>
<dbReference type="ProteomicsDB" id="84072">
    <molecule id="Q9UBU7-2"/>
</dbReference>
<dbReference type="Pumba" id="Q9UBU7"/>
<dbReference type="Antibodypedia" id="15373">
    <property type="antibodies" value="241 antibodies from 34 providers"/>
</dbReference>
<dbReference type="DNASU" id="10926"/>
<dbReference type="Ensembl" id="ENST00000265728.6">
    <molecule id="Q9UBU7-1"/>
    <property type="protein sequence ID" value="ENSP00000265728.1"/>
    <property type="gene ID" value="ENSG00000006634.8"/>
</dbReference>
<dbReference type="Ensembl" id="ENST00000413643.5">
    <molecule id="Q9UBU7-2"/>
    <property type="protein sequence ID" value="ENSP00000414083.1"/>
    <property type="gene ID" value="ENSG00000006634.8"/>
</dbReference>
<dbReference type="GeneID" id="10926"/>
<dbReference type="KEGG" id="hsa:10926"/>
<dbReference type="MANE-Select" id="ENST00000265728.6">
    <property type="protein sequence ID" value="ENSP00000265728.1"/>
    <property type="RefSeq nucleotide sequence ID" value="NM_006716.4"/>
    <property type="RefSeq protein sequence ID" value="NP_006707.1"/>
</dbReference>
<dbReference type="UCSC" id="uc003ujf.1">
    <molecule id="Q9UBU7-1"/>
    <property type="organism name" value="human"/>
</dbReference>
<dbReference type="AGR" id="HGNC:17364"/>
<dbReference type="CTD" id="10926"/>
<dbReference type="DisGeNET" id="10926"/>
<dbReference type="GeneCards" id="DBF4"/>
<dbReference type="HGNC" id="HGNC:17364">
    <property type="gene designation" value="DBF4"/>
</dbReference>
<dbReference type="HPA" id="ENSG00000006634">
    <property type="expression patterns" value="Tissue enriched (testis)"/>
</dbReference>
<dbReference type="MIM" id="604281">
    <property type="type" value="gene"/>
</dbReference>
<dbReference type="neXtProt" id="NX_Q9UBU7"/>
<dbReference type="OpenTargets" id="ENSG00000006634"/>
<dbReference type="PharmGKB" id="PA142672016"/>
<dbReference type="VEuPathDB" id="HostDB:ENSG00000006634"/>
<dbReference type="eggNOG" id="KOG4139">
    <property type="taxonomic scope" value="Eukaryota"/>
</dbReference>
<dbReference type="GeneTree" id="ENSGT00530000063909"/>
<dbReference type="HOGENOM" id="CLU_030726_2_0_1"/>
<dbReference type="InParanoid" id="Q9UBU7"/>
<dbReference type="OMA" id="QNMELCV"/>
<dbReference type="OrthoDB" id="21380at2759"/>
<dbReference type="PAN-GO" id="Q9UBU7">
    <property type="GO annotations" value="5 GO annotations based on evolutionary models"/>
</dbReference>
<dbReference type="PhylomeDB" id="Q9UBU7"/>
<dbReference type="TreeFam" id="TF332790"/>
<dbReference type="PathwayCommons" id="Q9UBU7"/>
<dbReference type="Reactome" id="R-HSA-176187">
    <property type="pathway name" value="Activation of ATR in response to replication stress"/>
</dbReference>
<dbReference type="Reactome" id="R-HSA-68962">
    <property type="pathway name" value="Activation of the pre-replicative complex"/>
</dbReference>
<dbReference type="SignaLink" id="Q9UBU7"/>
<dbReference type="SIGNOR" id="Q9UBU7"/>
<dbReference type="BioGRID-ORCS" id="10926">
    <property type="hits" value="520 hits in 1125 CRISPR screens"/>
</dbReference>
<dbReference type="ChiTaRS" id="DBF4">
    <property type="organism name" value="human"/>
</dbReference>
<dbReference type="EvolutionaryTrace" id="Q9UBU7"/>
<dbReference type="GeneWiki" id="DBF4"/>
<dbReference type="GenomeRNAi" id="10926"/>
<dbReference type="Pharos" id="Q9UBU7">
    <property type="development level" value="Tbio"/>
</dbReference>
<dbReference type="PRO" id="PR:Q9UBU7"/>
<dbReference type="Proteomes" id="UP000005640">
    <property type="component" value="Chromosome 7"/>
</dbReference>
<dbReference type="RNAct" id="Q9UBU7">
    <property type="molecule type" value="protein"/>
</dbReference>
<dbReference type="Bgee" id="ENSG00000006634">
    <property type="expression patterns" value="Expressed in male germ line stem cell (sensu Vertebrata) in testis and 148 other cell types or tissues"/>
</dbReference>
<dbReference type="ExpressionAtlas" id="Q9UBU7">
    <property type="expression patterns" value="baseline and differential"/>
</dbReference>
<dbReference type="GO" id="GO:0031431">
    <property type="term" value="C:Dbf4-dependent protein kinase complex"/>
    <property type="evidence" value="ECO:0000318"/>
    <property type="project" value="GO_Central"/>
</dbReference>
<dbReference type="GO" id="GO:0016604">
    <property type="term" value="C:nuclear body"/>
    <property type="evidence" value="ECO:0000314"/>
    <property type="project" value="HPA"/>
</dbReference>
<dbReference type="GO" id="GO:0005654">
    <property type="term" value="C:nucleoplasm"/>
    <property type="evidence" value="ECO:0000314"/>
    <property type="project" value="HPA"/>
</dbReference>
<dbReference type="GO" id="GO:0008047">
    <property type="term" value="F:enzyme activator activity"/>
    <property type="evidence" value="ECO:0000304"/>
    <property type="project" value="ProtInc"/>
</dbReference>
<dbReference type="GO" id="GO:0003676">
    <property type="term" value="F:nucleic acid binding"/>
    <property type="evidence" value="ECO:0007669"/>
    <property type="project" value="InterPro"/>
</dbReference>
<dbReference type="GO" id="GO:0043539">
    <property type="term" value="F:protein serine/threonine kinase activator activity"/>
    <property type="evidence" value="ECO:0000318"/>
    <property type="project" value="GO_Central"/>
</dbReference>
<dbReference type="GO" id="GO:0008270">
    <property type="term" value="F:zinc ion binding"/>
    <property type="evidence" value="ECO:0007669"/>
    <property type="project" value="UniProtKB-KW"/>
</dbReference>
<dbReference type="GO" id="GO:0006260">
    <property type="term" value="P:DNA replication"/>
    <property type="evidence" value="ECO:0000304"/>
    <property type="project" value="ProtInc"/>
</dbReference>
<dbReference type="GO" id="GO:0000082">
    <property type="term" value="P:G1/S transition of mitotic cell cycle"/>
    <property type="evidence" value="ECO:0000304"/>
    <property type="project" value="ProtInc"/>
</dbReference>
<dbReference type="GO" id="GO:0010571">
    <property type="term" value="P:positive regulation of nuclear cell cycle DNA replication"/>
    <property type="evidence" value="ECO:0000318"/>
    <property type="project" value="GO_Central"/>
</dbReference>
<dbReference type="GO" id="GO:1901987">
    <property type="term" value="P:regulation of cell cycle phase transition"/>
    <property type="evidence" value="ECO:0000318"/>
    <property type="project" value="GO_Central"/>
</dbReference>
<dbReference type="DisProt" id="DP03042"/>
<dbReference type="FunFam" id="2.10.50.40:FF:000001">
    <property type="entry name" value="Protein DBF4 homolog A"/>
    <property type="match status" value="1"/>
</dbReference>
<dbReference type="FunFam" id="6.10.250.3410:FF:000001">
    <property type="entry name" value="Protein DBF4 homolog A"/>
    <property type="match status" value="1"/>
</dbReference>
<dbReference type="Gene3D" id="2.10.50.40">
    <property type="match status" value="1"/>
</dbReference>
<dbReference type="Gene3D" id="6.10.250.3410">
    <property type="entry name" value="DBF zinc finger"/>
    <property type="match status" value="1"/>
</dbReference>
<dbReference type="InterPro" id="IPR051590">
    <property type="entry name" value="Replication_Regulatory_Kinase"/>
</dbReference>
<dbReference type="InterPro" id="IPR006572">
    <property type="entry name" value="Znf_DBF"/>
</dbReference>
<dbReference type="InterPro" id="IPR038545">
    <property type="entry name" value="Znf_DBF_sf"/>
</dbReference>
<dbReference type="PANTHER" id="PTHR15375">
    <property type="entry name" value="ACTIVATOR OF S-PHASE KINASE-RELATED"/>
    <property type="match status" value="1"/>
</dbReference>
<dbReference type="PANTHER" id="PTHR15375:SF22">
    <property type="entry name" value="PROTEIN DBF4 HOMOLOG A"/>
    <property type="match status" value="1"/>
</dbReference>
<dbReference type="Pfam" id="PF07535">
    <property type="entry name" value="zf-DBF"/>
    <property type="match status" value="1"/>
</dbReference>
<dbReference type="SMART" id="SM00586">
    <property type="entry name" value="ZnF_DBF"/>
    <property type="match status" value="1"/>
</dbReference>
<dbReference type="PROSITE" id="PS51265">
    <property type="entry name" value="ZF_DBF4"/>
    <property type="match status" value="1"/>
</dbReference>
<gene>
    <name type="primary">DBF4</name>
    <name type="synonym">ASK</name>
    <name type="synonym">DBF4A</name>
    <name type="synonym">ZDBF1</name>
</gene>
<protein>
    <recommendedName>
        <fullName>Protein DBF4 homolog A</fullName>
    </recommendedName>
    <alternativeName>
        <fullName>Activator of S phase kinase</fullName>
    </alternativeName>
    <alternativeName>
        <fullName>Chiffon homolog A</fullName>
    </alternativeName>
    <alternativeName>
        <fullName>DBF4-type zinc finger-containing protein 1</fullName>
    </alternativeName>
</protein>
<sequence>MNSGAMRIHSKGHFQGGIQVKNEKNRPSLKSLKTDNRPEKSKCKPLWGKVFYLDLPSVTISEKLQKDIKDLGGRVEEFLSKDISYLISNKKEAKFAQTLGRISPVPSPESAYTAETTSPHPSHDGSSFKSPDTVCLSRGKLLVEKAIKDHDFIPSNSILSNALSWGVKILHIDDIRYYIEQKKKELYLLKKSSTSVRDGGKRVGSGAQKTRTGRLKKPFVKVEDMSQLYRPFYLQLTNMPFINYSIQKPCSPFDVDKPSSMQKQTQVKLRIQTDGDKYGGTSIQLQLKEKKKKGYCECCLQKYEDLETHLLSEQHRNFAQSNQYQVVDDIVSKLVFDFVEYEKDTPKKKRIKYSVGSLSPVSASVLKKTEQKEKVELQHISQKDCQEDDTTVKEQNFLYKETQETEKKLLFISEPIPHPSNELRGLNEKMSNKCSMLSTAEDDIRQNFTQLPLHKNKQECILDISEHTLSENDLEELRVDHYKCNIQASVHVSDFSTDNSGSQPKQKSDTVLFPAKDLKEKDLHSIFTHDSGLITINSSQEHLTVQAKAPFHTPPEEPNECDFKNMDSLPSGKIHRKVKIILGRNRKENLEPNAEFDKRTEFITQEENRICSSPVQSLLDLFQTSEEKSEFLGFTSYTEKSGICNVLDIWEEENSDNLLTAFFSSPSTSTFTGF</sequence>
<evidence type="ECO:0000255" key="1">
    <source>
        <dbReference type="PROSITE-ProRule" id="PRU00600"/>
    </source>
</evidence>
<evidence type="ECO:0000256" key="2">
    <source>
        <dbReference type="SAM" id="MobiDB-lite"/>
    </source>
</evidence>
<evidence type="ECO:0000269" key="3">
    <source>
    </source>
</evidence>
<evidence type="ECO:0000269" key="4">
    <source>
    </source>
</evidence>
<evidence type="ECO:0000269" key="5">
    <source>
    </source>
</evidence>
<evidence type="ECO:0000269" key="6">
    <source>
    </source>
</evidence>
<evidence type="ECO:0000269" key="7">
    <source>
    </source>
</evidence>
<evidence type="ECO:0000303" key="8">
    <source>
    </source>
</evidence>
<evidence type="ECO:0000305" key="9"/>
<evidence type="ECO:0007744" key="10">
    <source>
    </source>
</evidence>
<evidence type="ECO:0007744" key="11">
    <source>
    </source>
</evidence>
<evidence type="ECO:0007744" key="12">
    <source>
    </source>
</evidence>
<evidence type="ECO:0007744" key="13">
    <source>
    </source>
</evidence>
<evidence type="ECO:0007829" key="14">
    <source>
        <dbReference type="PDB" id="4F9B"/>
    </source>
</evidence>
<evidence type="ECO:0007829" key="15">
    <source>
        <dbReference type="PDB" id="6YA6"/>
    </source>
</evidence>
<evidence type="ECO:0007829" key="16">
    <source>
        <dbReference type="PDB" id="6YA7"/>
    </source>
</evidence>
<organism>
    <name type="scientific">Homo sapiens</name>
    <name type="common">Human</name>
    <dbReference type="NCBI Taxonomy" id="9606"/>
    <lineage>
        <taxon>Eukaryota</taxon>
        <taxon>Metazoa</taxon>
        <taxon>Chordata</taxon>
        <taxon>Craniata</taxon>
        <taxon>Vertebrata</taxon>
        <taxon>Euteleostomi</taxon>
        <taxon>Mammalia</taxon>
        <taxon>Eutheria</taxon>
        <taxon>Euarchontoglires</taxon>
        <taxon>Primates</taxon>
        <taxon>Haplorrhini</taxon>
        <taxon>Catarrhini</taxon>
        <taxon>Hominidae</taxon>
        <taxon>Homo</taxon>
    </lineage>
</organism>
<reference key="1">
    <citation type="journal article" date="1999" name="Mol. Cell. Biol.">
        <title>A novel growth- and cell cycle-regulated protein, ASK, activates human Cdc7-related kinase and is essential for G1/S transition in mammalian cells.</title>
        <authorList>
            <person name="Kumagai H."/>
            <person name="Sato N."/>
            <person name="Yamada M."/>
            <person name="Mahony D."/>
            <person name="Seghezzi W."/>
            <person name="Lees E."/>
            <person name="Arai K."/>
            <person name="Masai H."/>
        </authorList>
    </citation>
    <scope>NUCLEOTIDE SEQUENCE [MRNA] (ISOFORMS 1 AND 2)</scope>
    <scope>FUNCTION</scope>
    <scope>INTERACTION WITH CDC7</scope>
    <scope>SUBCELLULAR LOCATION</scope>
    <scope>TISSUE SPECIFICITY</scope>
    <scope>INDUCTION</scope>
</reference>
<reference key="2">
    <citation type="journal article" date="1999" name="EMBO J.">
        <title>Mammalian Cdc7-Dbf4 protein kinase complex is essential for initiation of DNA replication.</title>
        <authorList>
            <person name="Jiang W."/>
            <person name="McDonald D."/>
            <person name="Hope T.J."/>
            <person name="Hunter T."/>
        </authorList>
    </citation>
    <scope>NUCLEOTIDE SEQUENCE [MRNA] (ISOFORM 1)</scope>
    <scope>FUNCTION</scope>
    <scope>INTERACTION WITH CDC7</scope>
    <scope>INDUCTION</scope>
</reference>
<reference key="3">
    <citation type="submission" date="1999-06" db="EMBL/GenBank/DDBJ databases">
        <title>Use of a semi-automated yeast two-hybrid system to identify proteins that interact with the human Cdc7 protein.</title>
        <authorList>
            <person name="Hollingsworth R."/>
        </authorList>
    </citation>
    <scope>NUCLEOTIDE SEQUENCE [MRNA] (ISOFORM 1)</scope>
</reference>
<reference key="4">
    <citation type="journal article" date="2004" name="Nat. Genet.">
        <title>Complete sequencing and characterization of 21,243 full-length human cDNAs.</title>
        <authorList>
            <person name="Ota T."/>
            <person name="Suzuki Y."/>
            <person name="Nishikawa T."/>
            <person name="Otsuki T."/>
            <person name="Sugiyama T."/>
            <person name="Irie R."/>
            <person name="Wakamatsu A."/>
            <person name="Hayashi K."/>
            <person name="Sato H."/>
            <person name="Nagai K."/>
            <person name="Kimura K."/>
            <person name="Makita H."/>
            <person name="Sekine M."/>
            <person name="Obayashi M."/>
            <person name="Nishi T."/>
            <person name="Shibahara T."/>
            <person name="Tanaka T."/>
            <person name="Ishii S."/>
            <person name="Yamamoto J."/>
            <person name="Saito K."/>
            <person name="Kawai Y."/>
            <person name="Isono Y."/>
            <person name="Nakamura Y."/>
            <person name="Nagahari K."/>
            <person name="Murakami K."/>
            <person name="Yasuda T."/>
            <person name="Iwayanagi T."/>
            <person name="Wagatsuma M."/>
            <person name="Shiratori A."/>
            <person name="Sudo H."/>
            <person name="Hosoiri T."/>
            <person name="Kaku Y."/>
            <person name="Kodaira H."/>
            <person name="Kondo H."/>
            <person name="Sugawara M."/>
            <person name="Takahashi M."/>
            <person name="Kanda K."/>
            <person name="Yokoi T."/>
            <person name="Furuya T."/>
            <person name="Kikkawa E."/>
            <person name="Omura Y."/>
            <person name="Abe K."/>
            <person name="Kamihara K."/>
            <person name="Katsuta N."/>
            <person name="Sato K."/>
            <person name="Tanikawa M."/>
            <person name="Yamazaki M."/>
            <person name="Ninomiya K."/>
            <person name="Ishibashi T."/>
            <person name="Yamashita H."/>
            <person name="Murakawa K."/>
            <person name="Fujimori K."/>
            <person name="Tanai H."/>
            <person name="Kimata M."/>
            <person name="Watanabe M."/>
            <person name="Hiraoka S."/>
            <person name="Chiba Y."/>
            <person name="Ishida S."/>
            <person name="Ono Y."/>
            <person name="Takiguchi S."/>
            <person name="Watanabe S."/>
            <person name="Yosida M."/>
            <person name="Hotuta T."/>
            <person name="Kusano J."/>
            <person name="Kanehori K."/>
            <person name="Takahashi-Fujii A."/>
            <person name="Hara H."/>
            <person name="Tanase T.-O."/>
            <person name="Nomura Y."/>
            <person name="Togiya S."/>
            <person name="Komai F."/>
            <person name="Hara R."/>
            <person name="Takeuchi K."/>
            <person name="Arita M."/>
            <person name="Imose N."/>
            <person name="Musashino K."/>
            <person name="Yuuki H."/>
            <person name="Oshima A."/>
            <person name="Sasaki N."/>
            <person name="Aotsuka S."/>
            <person name="Yoshikawa Y."/>
            <person name="Matsunawa H."/>
            <person name="Ichihara T."/>
            <person name="Shiohata N."/>
            <person name="Sano S."/>
            <person name="Moriya S."/>
            <person name="Momiyama H."/>
            <person name="Satoh N."/>
            <person name="Takami S."/>
            <person name="Terashima Y."/>
            <person name="Suzuki O."/>
            <person name="Nakagawa S."/>
            <person name="Senoh A."/>
            <person name="Mizoguchi H."/>
            <person name="Goto Y."/>
            <person name="Shimizu F."/>
            <person name="Wakebe H."/>
            <person name="Hishigaki H."/>
            <person name="Watanabe T."/>
            <person name="Sugiyama A."/>
            <person name="Takemoto M."/>
            <person name="Kawakami B."/>
            <person name="Yamazaki M."/>
            <person name="Watanabe K."/>
            <person name="Kumagai A."/>
            <person name="Itakura S."/>
            <person name="Fukuzumi Y."/>
            <person name="Fujimori Y."/>
            <person name="Komiyama M."/>
            <person name="Tashiro H."/>
            <person name="Tanigami A."/>
            <person name="Fujiwara T."/>
            <person name="Ono T."/>
            <person name="Yamada K."/>
            <person name="Fujii Y."/>
            <person name="Ozaki K."/>
            <person name="Hirao M."/>
            <person name="Ohmori Y."/>
            <person name="Kawabata A."/>
            <person name="Hikiji T."/>
            <person name="Kobatake N."/>
            <person name="Inagaki H."/>
            <person name="Ikema Y."/>
            <person name="Okamoto S."/>
            <person name="Okitani R."/>
            <person name="Kawakami T."/>
            <person name="Noguchi S."/>
            <person name="Itoh T."/>
            <person name="Shigeta K."/>
            <person name="Senba T."/>
            <person name="Matsumura K."/>
            <person name="Nakajima Y."/>
            <person name="Mizuno T."/>
            <person name="Morinaga M."/>
            <person name="Sasaki M."/>
            <person name="Togashi T."/>
            <person name="Oyama M."/>
            <person name="Hata H."/>
            <person name="Watanabe M."/>
            <person name="Komatsu T."/>
            <person name="Mizushima-Sugano J."/>
            <person name="Satoh T."/>
            <person name="Shirai Y."/>
            <person name="Takahashi Y."/>
            <person name="Nakagawa K."/>
            <person name="Okumura K."/>
            <person name="Nagase T."/>
            <person name="Nomura N."/>
            <person name="Kikuchi H."/>
            <person name="Masuho Y."/>
            <person name="Yamashita R."/>
            <person name="Nakai K."/>
            <person name="Yada T."/>
            <person name="Nakamura Y."/>
            <person name="Ohara O."/>
            <person name="Isogai T."/>
            <person name="Sugano S."/>
        </authorList>
    </citation>
    <scope>NUCLEOTIDE SEQUENCE [LARGE SCALE MRNA] (ISOFORM 1)</scope>
    <source>
        <tissue>Testis</tissue>
    </source>
</reference>
<reference key="5">
    <citation type="journal article" date="2003" name="Nature">
        <title>The DNA sequence of human chromosome 7.</title>
        <authorList>
            <person name="Hillier L.W."/>
            <person name="Fulton R.S."/>
            <person name="Fulton L.A."/>
            <person name="Graves T.A."/>
            <person name="Pepin K.H."/>
            <person name="Wagner-McPherson C."/>
            <person name="Layman D."/>
            <person name="Maas J."/>
            <person name="Jaeger S."/>
            <person name="Walker R."/>
            <person name="Wylie K."/>
            <person name="Sekhon M."/>
            <person name="Becker M.C."/>
            <person name="O'Laughlin M.D."/>
            <person name="Schaller M.E."/>
            <person name="Fewell G.A."/>
            <person name="Delehaunty K.D."/>
            <person name="Miner T.L."/>
            <person name="Nash W.E."/>
            <person name="Cordes M."/>
            <person name="Du H."/>
            <person name="Sun H."/>
            <person name="Edwards J."/>
            <person name="Bradshaw-Cordum H."/>
            <person name="Ali J."/>
            <person name="Andrews S."/>
            <person name="Isak A."/>
            <person name="Vanbrunt A."/>
            <person name="Nguyen C."/>
            <person name="Du F."/>
            <person name="Lamar B."/>
            <person name="Courtney L."/>
            <person name="Kalicki J."/>
            <person name="Ozersky P."/>
            <person name="Bielicki L."/>
            <person name="Scott K."/>
            <person name="Holmes A."/>
            <person name="Harkins R."/>
            <person name="Harris A."/>
            <person name="Strong C.M."/>
            <person name="Hou S."/>
            <person name="Tomlinson C."/>
            <person name="Dauphin-Kohlberg S."/>
            <person name="Kozlowicz-Reilly A."/>
            <person name="Leonard S."/>
            <person name="Rohlfing T."/>
            <person name="Rock S.M."/>
            <person name="Tin-Wollam A.-M."/>
            <person name="Abbott A."/>
            <person name="Minx P."/>
            <person name="Maupin R."/>
            <person name="Strowmatt C."/>
            <person name="Latreille P."/>
            <person name="Miller N."/>
            <person name="Johnson D."/>
            <person name="Murray J."/>
            <person name="Woessner J.P."/>
            <person name="Wendl M.C."/>
            <person name="Yang S.-P."/>
            <person name="Schultz B.R."/>
            <person name="Wallis J.W."/>
            <person name="Spieth J."/>
            <person name="Bieri T.A."/>
            <person name="Nelson J.O."/>
            <person name="Berkowicz N."/>
            <person name="Wohldmann P.E."/>
            <person name="Cook L.L."/>
            <person name="Hickenbotham M.T."/>
            <person name="Eldred J."/>
            <person name="Williams D."/>
            <person name="Bedell J.A."/>
            <person name="Mardis E.R."/>
            <person name="Clifton S.W."/>
            <person name="Chissoe S.L."/>
            <person name="Marra M.A."/>
            <person name="Raymond C."/>
            <person name="Haugen E."/>
            <person name="Gillett W."/>
            <person name="Zhou Y."/>
            <person name="James R."/>
            <person name="Phelps K."/>
            <person name="Iadanoto S."/>
            <person name="Bubb K."/>
            <person name="Simms E."/>
            <person name="Levy R."/>
            <person name="Clendenning J."/>
            <person name="Kaul R."/>
            <person name="Kent W.J."/>
            <person name="Furey T.S."/>
            <person name="Baertsch R.A."/>
            <person name="Brent M.R."/>
            <person name="Keibler E."/>
            <person name="Flicek P."/>
            <person name="Bork P."/>
            <person name="Suyama M."/>
            <person name="Bailey J.A."/>
            <person name="Portnoy M.E."/>
            <person name="Torrents D."/>
            <person name="Chinwalla A.T."/>
            <person name="Gish W.R."/>
            <person name="Eddy S.R."/>
            <person name="McPherson J.D."/>
            <person name="Olson M.V."/>
            <person name="Eichler E.E."/>
            <person name="Green E.D."/>
            <person name="Waterston R.H."/>
            <person name="Wilson R.K."/>
        </authorList>
    </citation>
    <scope>NUCLEOTIDE SEQUENCE [LARGE SCALE GENOMIC DNA]</scope>
</reference>
<reference key="6">
    <citation type="journal article" date="2003" name="Science">
        <title>Human chromosome 7: DNA sequence and biology.</title>
        <authorList>
            <person name="Scherer S.W."/>
            <person name="Cheung J."/>
            <person name="MacDonald J.R."/>
            <person name="Osborne L.R."/>
            <person name="Nakabayashi K."/>
            <person name="Herbrick J.-A."/>
            <person name="Carson A.R."/>
            <person name="Parker-Katiraee L."/>
            <person name="Skaug J."/>
            <person name="Khaja R."/>
            <person name="Zhang J."/>
            <person name="Hudek A.K."/>
            <person name="Li M."/>
            <person name="Haddad M."/>
            <person name="Duggan G.E."/>
            <person name="Fernandez B.A."/>
            <person name="Kanematsu E."/>
            <person name="Gentles S."/>
            <person name="Christopoulos C.C."/>
            <person name="Choufani S."/>
            <person name="Kwasnicka D."/>
            <person name="Zheng X.H."/>
            <person name="Lai Z."/>
            <person name="Nusskern D.R."/>
            <person name="Zhang Q."/>
            <person name="Gu Z."/>
            <person name="Lu F."/>
            <person name="Zeesman S."/>
            <person name="Nowaczyk M.J."/>
            <person name="Teshima I."/>
            <person name="Chitayat D."/>
            <person name="Shuman C."/>
            <person name="Weksberg R."/>
            <person name="Zackai E.H."/>
            <person name="Grebe T.A."/>
            <person name="Cox S.R."/>
            <person name="Kirkpatrick S.J."/>
            <person name="Rahman N."/>
            <person name="Friedman J.M."/>
            <person name="Heng H.H.Q."/>
            <person name="Pelicci P.G."/>
            <person name="Lo-Coco F."/>
            <person name="Belloni E."/>
            <person name="Shaffer L.G."/>
            <person name="Pober B."/>
            <person name="Morton C.C."/>
            <person name="Gusella J.F."/>
            <person name="Bruns G.A.P."/>
            <person name="Korf B.R."/>
            <person name="Quade B.J."/>
            <person name="Ligon A.H."/>
            <person name="Ferguson H."/>
            <person name="Higgins A.W."/>
            <person name="Leach N.T."/>
            <person name="Herrick S.R."/>
            <person name="Lemyre E."/>
            <person name="Farra C.G."/>
            <person name="Kim H.-G."/>
            <person name="Summers A.M."/>
            <person name="Gripp K.W."/>
            <person name="Roberts W."/>
            <person name="Szatmari P."/>
            <person name="Winsor E.J.T."/>
            <person name="Grzeschik K.-H."/>
            <person name="Teebi A."/>
            <person name="Minassian B.A."/>
            <person name="Kere J."/>
            <person name="Armengol L."/>
            <person name="Pujana M.A."/>
            <person name="Estivill X."/>
            <person name="Wilson M.D."/>
            <person name="Koop B.F."/>
            <person name="Tosi S."/>
            <person name="Moore G.E."/>
            <person name="Boright A.P."/>
            <person name="Zlotorynski E."/>
            <person name="Kerem B."/>
            <person name="Kroisel P.M."/>
            <person name="Petek E."/>
            <person name="Oscier D.G."/>
            <person name="Mould S.J."/>
            <person name="Doehner H."/>
            <person name="Doehner K."/>
            <person name="Rommens J.M."/>
            <person name="Vincent J.B."/>
            <person name="Venter J.C."/>
            <person name="Li P.W."/>
            <person name="Mural R.J."/>
            <person name="Adams M.D."/>
            <person name="Tsui L.-C."/>
        </authorList>
    </citation>
    <scope>NUCLEOTIDE SEQUENCE [LARGE SCALE GENOMIC DNA]</scope>
</reference>
<reference key="7">
    <citation type="submission" date="2005-09" db="EMBL/GenBank/DDBJ databases">
        <authorList>
            <person name="Mural R.J."/>
            <person name="Istrail S."/>
            <person name="Sutton G.G."/>
            <person name="Florea L."/>
            <person name="Halpern A.L."/>
            <person name="Mobarry C.M."/>
            <person name="Lippert R."/>
            <person name="Walenz B."/>
            <person name="Shatkay H."/>
            <person name="Dew I."/>
            <person name="Miller J.R."/>
            <person name="Flanigan M.J."/>
            <person name="Edwards N.J."/>
            <person name="Bolanos R."/>
            <person name="Fasulo D."/>
            <person name="Halldorsson B.V."/>
            <person name="Hannenhalli S."/>
            <person name="Turner R."/>
            <person name="Yooseph S."/>
            <person name="Lu F."/>
            <person name="Nusskern D.R."/>
            <person name="Shue B.C."/>
            <person name="Zheng X.H."/>
            <person name="Zhong F."/>
            <person name="Delcher A.L."/>
            <person name="Huson D.H."/>
            <person name="Kravitz S.A."/>
            <person name="Mouchard L."/>
            <person name="Reinert K."/>
            <person name="Remington K.A."/>
            <person name="Clark A.G."/>
            <person name="Waterman M.S."/>
            <person name="Eichler E.E."/>
            <person name="Adams M.D."/>
            <person name="Hunkapiller M.W."/>
            <person name="Myers E.W."/>
            <person name="Venter J.C."/>
        </authorList>
    </citation>
    <scope>NUCLEOTIDE SEQUENCE [LARGE SCALE GENOMIC DNA]</scope>
</reference>
<reference key="8">
    <citation type="journal article" date="2004" name="Genome Res.">
        <title>The status, quality, and expansion of the NIH full-length cDNA project: the Mammalian Gene Collection (MGC).</title>
        <authorList>
            <consortium name="The MGC Project Team"/>
        </authorList>
    </citation>
    <scope>NUCLEOTIDE SEQUENCE [LARGE SCALE MRNA] (ISOFORM 1)</scope>
    <source>
        <tissue>Brain</tissue>
        <tissue>Testis</tissue>
    </source>
</reference>
<reference key="9">
    <citation type="journal article" date="2004" name="Cancer Res.">
        <title>Functional interaction between tumor suppressor menin and activator of S-phase kinase.</title>
        <authorList>
            <person name="Schnepp R.W."/>
            <person name="Hou Z."/>
            <person name="Wang H."/>
            <person name="Petersen C."/>
            <person name="Silva A."/>
            <person name="Masai H."/>
            <person name="Hua X."/>
        </authorList>
    </citation>
    <scope>INTERACTION WITH MEN1</scope>
</reference>
<reference key="10">
    <citation type="journal article" date="2006" name="Nat. Biotechnol.">
        <title>A probability-based approach for high-throughput protein phosphorylation analysis and site localization.</title>
        <authorList>
            <person name="Beausoleil S.A."/>
            <person name="Villen J."/>
            <person name="Gerber S.A."/>
            <person name="Rush J."/>
            <person name="Gygi S.P."/>
        </authorList>
    </citation>
    <scope>IDENTIFICATION BY MASS SPECTROMETRY [LARGE SCALE ANALYSIS]</scope>
    <source>
        <tissue>Cervix carcinoma</tissue>
    </source>
</reference>
<reference key="11">
    <citation type="journal article" date="2007" name="J. Biol. Chem.">
        <title>Cdc7 is an active kinase in human cancer cells undergoing replication stress.</title>
        <authorList>
            <person name="Tenca P."/>
            <person name="Brotherton D."/>
            <person name="Montagnoli A."/>
            <person name="Rainoldi S."/>
            <person name="Albanese C."/>
            <person name="Santocanale C."/>
        </authorList>
    </citation>
    <scope>FUNCTION</scope>
    <scope>INTERACTION WITH CDC7</scope>
</reference>
<reference key="12">
    <citation type="journal article" date="2007" name="Science">
        <title>ATM and ATR substrate analysis reveals extensive protein networks responsive to DNA damage.</title>
        <authorList>
            <person name="Matsuoka S."/>
            <person name="Ballif B.A."/>
            <person name="Smogorzewska A."/>
            <person name="McDonald E.R. III"/>
            <person name="Hurov K.E."/>
            <person name="Luo J."/>
            <person name="Bakalarski C.E."/>
            <person name="Zhao Z."/>
            <person name="Solimini N."/>
            <person name="Lerenthal Y."/>
            <person name="Shiloh Y."/>
            <person name="Gygi S.P."/>
            <person name="Elledge S.J."/>
        </authorList>
    </citation>
    <scope>IDENTIFICATION BY MASS SPECTROMETRY [LARGE SCALE ANALYSIS]</scope>
    <source>
        <tissue>Embryonic kidney</tissue>
    </source>
</reference>
<reference key="13">
    <citation type="journal article" date="2008" name="Mol. Cell">
        <title>Kinase-selective enrichment enables quantitative phosphoproteomics of the kinome across the cell cycle.</title>
        <authorList>
            <person name="Daub H."/>
            <person name="Olsen J.V."/>
            <person name="Bairlein M."/>
            <person name="Gnad F."/>
            <person name="Oppermann F.S."/>
            <person name="Korner R."/>
            <person name="Greff Z."/>
            <person name="Keri G."/>
            <person name="Stemmann O."/>
            <person name="Mann M."/>
        </authorList>
    </citation>
    <scope>IDENTIFICATION BY MASS SPECTROMETRY [LARGE SCALE ANALYSIS]</scope>
    <source>
        <tissue>Cervix carcinoma</tissue>
    </source>
</reference>
<reference key="14">
    <citation type="journal article" date="2008" name="Proc. Natl. Acad. Sci. U.S.A.">
        <title>A quantitative atlas of mitotic phosphorylation.</title>
        <authorList>
            <person name="Dephoure N."/>
            <person name="Zhou C."/>
            <person name="Villen J."/>
            <person name="Beausoleil S.A."/>
            <person name="Bakalarski C.E."/>
            <person name="Elledge S.J."/>
            <person name="Gygi S.P."/>
        </authorList>
    </citation>
    <scope>PHOSPHORYLATION [LARGE SCALE ANALYSIS] AT SER-354 AND SER-359</scope>
    <scope>IDENTIFICATION BY MASS SPECTROMETRY [LARGE SCALE ANALYSIS]</scope>
    <source>
        <tissue>Cervix carcinoma</tissue>
    </source>
</reference>
<reference key="15">
    <citation type="journal article" date="2009" name="Anal. Chem.">
        <title>Lys-N and trypsin cover complementary parts of the phosphoproteome in a refined SCX-based approach.</title>
        <authorList>
            <person name="Gauci S."/>
            <person name="Helbig A.O."/>
            <person name="Slijper M."/>
            <person name="Krijgsveld J."/>
            <person name="Heck A.J."/>
            <person name="Mohammed S."/>
        </authorList>
    </citation>
    <scope>IDENTIFICATION BY MASS SPECTROMETRY [LARGE SCALE ANALYSIS]</scope>
</reference>
<reference key="16">
    <citation type="journal article" date="2009" name="Mol. Cell. Proteomics">
        <title>Large-scale proteomics analysis of the human kinome.</title>
        <authorList>
            <person name="Oppermann F.S."/>
            <person name="Gnad F."/>
            <person name="Olsen J.V."/>
            <person name="Hornberger R."/>
            <person name="Greff Z."/>
            <person name="Keri G."/>
            <person name="Mann M."/>
            <person name="Daub H."/>
        </authorList>
    </citation>
    <scope>PHOSPHORYLATION [LARGE SCALE ANALYSIS] AT THR-273; THR-345; SER-381 AND SER-413</scope>
    <scope>IDENTIFICATION BY MASS SPECTROMETRY [LARGE SCALE ANALYSIS]</scope>
</reference>
<reference key="17">
    <citation type="journal article" date="2009" name="Sci. Signal.">
        <title>Quantitative phosphoproteomic analysis of T cell receptor signaling reveals system-wide modulation of protein-protein interactions.</title>
        <authorList>
            <person name="Mayya V."/>
            <person name="Lundgren D.H."/>
            <person name="Hwang S.-I."/>
            <person name="Rezaul K."/>
            <person name="Wu L."/>
            <person name="Eng J.K."/>
            <person name="Rodionov V."/>
            <person name="Han D.K."/>
        </authorList>
    </citation>
    <scope>PHOSPHORYLATION [LARGE SCALE ANALYSIS] AT SER-359</scope>
    <scope>IDENTIFICATION BY MASS SPECTROMETRY [LARGE SCALE ANALYSIS]</scope>
    <source>
        <tissue>Leukemic T-cell</tissue>
    </source>
</reference>
<reference key="18">
    <citation type="journal article" date="2010" name="Sci. Signal.">
        <title>Quantitative phosphoproteomics reveals widespread full phosphorylation site occupancy during mitosis.</title>
        <authorList>
            <person name="Olsen J.V."/>
            <person name="Vermeulen M."/>
            <person name="Santamaria A."/>
            <person name="Kumar C."/>
            <person name="Miller M.L."/>
            <person name="Jensen L.J."/>
            <person name="Gnad F."/>
            <person name="Cox J."/>
            <person name="Jensen T.S."/>
            <person name="Nigg E.A."/>
            <person name="Brunak S."/>
            <person name="Mann M."/>
        </authorList>
    </citation>
    <scope>IDENTIFICATION BY MASS SPECTROMETRY [LARGE SCALE ANALYSIS]</scope>
    <source>
        <tissue>Cervix carcinoma</tissue>
    </source>
</reference>
<reference key="19">
    <citation type="journal article" date="2011" name="Sci. Signal.">
        <title>System-wide temporal characterization of the proteome and phosphoproteome of human embryonic stem cell differentiation.</title>
        <authorList>
            <person name="Rigbolt K.T."/>
            <person name="Prokhorova T.A."/>
            <person name="Akimov V."/>
            <person name="Henningsen J."/>
            <person name="Johansen P.T."/>
            <person name="Kratchmarova I."/>
            <person name="Kassem M."/>
            <person name="Mann M."/>
            <person name="Olsen J.V."/>
            <person name="Blagoev B."/>
        </authorList>
    </citation>
    <scope>IDENTIFICATION BY MASS SPECTROMETRY [LARGE SCALE ANALYSIS]</scope>
</reference>
<reference key="20">
    <citation type="journal article" date="2013" name="J. Proteome Res.">
        <title>Toward a comprehensive characterization of a human cancer cell phosphoproteome.</title>
        <authorList>
            <person name="Zhou H."/>
            <person name="Di Palma S."/>
            <person name="Preisinger C."/>
            <person name="Peng M."/>
            <person name="Polat A.N."/>
            <person name="Heck A.J."/>
            <person name="Mohammed S."/>
        </authorList>
    </citation>
    <scope>PHOSPHORYLATION [LARGE SCALE ANALYSIS] AT THR-273; SER-312; THR-345; SER-359; SER-381; SER-413; SER-508 AND THR-553</scope>
    <scope>IDENTIFICATION BY MASS SPECTROMETRY [LARGE SCALE ANALYSIS]</scope>
    <source>
        <tissue>Cervix carcinoma</tissue>
        <tissue>Erythroleukemia</tissue>
    </source>
</reference>
<reference key="21">
    <citation type="journal article" date="2018" name="Proc. Natl. Acad. Sci. U.S.A.">
        <title>Affinity switching of the LEDGF/p75 IBD interactome is governed by kinase-dependent phosphorylation.</title>
        <authorList>
            <person name="Sharma S."/>
            <person name="Cermakova K."/>
            <person name="De Rijck J."/>
            <person name="Demeulemeester J."/>
            <person name="Fabry M."/>
            <person name="El Ashkar S."/>
            <person name="Van Belle S."/>
            <person name="Lepsik M."/>
            <person name="Tesina P."/>
            <person name="Duchoslav V."/>
            <person name="Novak P."/>
            <person name="Hubalek M."/>
            <person name="Srb P."/>
            <person name="Christ F."/>
            <person name="Rezacova P."/>
            <person name="Hodges H.C."/>
            <person name="Debyser Z."/>
            <person name="Veverka V."/>
        </authorList>
    </citation>
    <scope>PHOSPHORYLATION AT SER-625; SER-667 AND SER-669</scope>
    <scope>INTERACTION WITH PSIP1</scope>
    <scope>DOMAIN IBM MOTIF</scope>
    <scope>MUTAGENESIS OF SER-625; PHE-631; PHE-634; SER-667 AND SER-669</scope>
</reference>
<accession>Q9UBU7</accession>
<accession>A4D1D8</accession>
<accession>A8K954</accession>
<accession>O75226</accession>
<accession>Q75MS6</accession>
<accession>Q75N01</accession>
<accession>Q9Y2M6</accession>